<comment type="function">
    <molecule>Isoform 1</molecule>
    <text evidence="2 4 5 6 9 11 12">Catalyzes the transfer of L-fucose, from a guanosine diphosphate-beta-L-fucose, to the N-acetyl glucosamine (GlcNAc) of a distal alpha2,3 sialylated lactosamine unit of a glycoprotein- or a glycolipid-linked sialopolylactosamines chain or of a distal or internal lactosamine unit of a neutral glycoprotein- or a glycolipid-linked polylactosamines chain through an alpha-1,3 glycosidic linkage and participates in surface expression of the sialyl Lewis X (sLe(x)), Lewis X (Le(x)) and non sialylated VIM2 determinants (PubMed:10728707, PubMed:1339443, PubMed:1520296, PubMed:17604274, PubMed:29593094, PubMed:7650030, PubMed:9363434, PubMed:9451035). Moreover transfers fucose to H-type 2 (Fucalpha1-2Galbeta1-4GlcNAc) chain acceptor substrates and participates in difucosylated sialyl Lewis x determinants (PubMed:1339443, PubMed:17604274). Also fucosylates a polylactosamine substrate having a 6 sulfate modification at the GlcNAc moiety and gives rise to sialyl and non-sialyl 6-sulfo lewis X (PubMed:10728707). Does not have activity towards type 1 ((Galbeta1-3GlcNAc)) and H-type 1 chain (Fucalpha1-2Galbeta1-3GlcNAc) acceptors substrates (PubMed:1339443, PubMed:17604274, PubMed:9363434).</text>
</comment>
<comment type="function">
    <molecule>Isoform 2</molecule>
    <text evidence="9">Does not have alpha(1,3)-fucosyltransferase activity.</text>
</comment>
<comment type="catalytic activity">
    <reaction evidence="6 8 11">
        <text>a beta-D-galactosyl-(1-&gt;4)-N-acetyl-beta-D-glucosaminyl derivative + GDP-beta-L-fucose = a beta-D-galactosyl-(1-&gt;4)-[alpha-L-fucosyl-(1-&gt;3)]-N-acetyl-beta-D-glucosaminyl derivative + GDP + H(+)</text>
        <dbReference type="Rhea" id="RHEA:14257"/>
        <dbReference type="ChEBI" id="CHEBI:15378"/>
        <dbReference type="ChEBI" id="CHEBI:57273"/>
        <dbReference type="ChEBI" id="CHEBI:58189"/>
        <dbReference type="ChEBI" id="CHEBI:133507"/>
        <dbReference type="ChEBI" id="CHEBI:137941"/>
        <dbReference type="EC" id="2.4.1.152"/>
    </reaction>
    <physiologicalReaction direction="left-to-right" evidence="17 18">
        <dbReference type="Rhea" id="RHEA:14258"/>
    </physiologicalReaction>
</comment>
<comment type="catalytic activity">
    <reaction evidence="8">
        <text>an N-acetyl-alpha-neuraminyl-(2-&gt;3)-beta-D-galactosyl-(1-&gt;4)-N-acetyl-beta-D-glucosaminyl derivative + GDP-beta-L-fucose = an alpha-Neu5Ac-(2-&gt;3)-beta-D-Gal-(1-&gt;4)-[alpha-L-Fuc-(1-&gt;3)]-beta-D-GlcNAc derivative + GDP + H(+)</text>
        <dbReference type="Rhea" id="RHEA:56076"/>
        <dbReference type="ChEBI" id="CHEBI:15378"/>
        <dbReference type="ChEBI" id="CHEBI:57273"/>
        <dbReference type="ChEBI" id="CHEBI:58189"/>
        <dbReference type="ChEBI" id="CHEBI:136545"/>
        <dbReference type="ChEBI" id="CHEBI:139509"/>
    </reaction>
    <physiologicalReaction direction="left-to-right" evidence="18">
        <dbReference type="Rhea" id="RHEA:56077"/>
    </physiologicalReaction>
</comment>
<comment type="catalytic activity">
    <reaction evidence="8">
        <text>an alpha-Neu5Ac-(2-&gt;3)-beta-D-Gal-(1-&gt;4)-beta-D-GlcNAc-(1-&gt;3)-beta-D-Gal-(1-&gt;4)-[alpha-L-Fuc-(1-&gt;3)]-beta-D-GlcNAc derivative + GDP-beta-L-fucose = an alpha-Neu5Ac-(2-&gt;3)-beta-D-Gal-(1-&gt;4)-[alpha-L-Fuc-(1-&gt;3)]-beta-D-GlcNAc-(1-&gt;3)-beta-D-Gal-(1-&gt;4)-[alpha-L-Fuc-(1-&gt;3)]-beta-D-GlcNAc derivative + GDP + H(+)</text>
        <dbReference type="Rhea" id="RHEA:52864"/>
        <dbReference type="ChEBI" id="CHEBI:15378"/>
        <dbReference type="ChEBI" id="CHEBI:57273"/>
        <dbReference type="ChEBI" id="CHEBI:58189"/>
        <dbReference type="ChEBI" id="CHEBI:145342"/>
        <dbReference type="ChEBI" id="CHEBI:145343"/>
    </reaction>
    <physiologicalReaction direction="left-to-right" evidence="18">
        <dbReference type="Rhea" id="RHEA:52865"/>
    </physiologicalReaction>
</comment>
<comment type="catalytic activity">
    <reaction evidence="6">
        <text>a neolactoside nLc6Cer + GDP-beta-L-fucose = beta-D-Gal-(1-&gt;4)-[alpha-L-Fuc-(1-&gt;3)]-beta-D-GlcNAc-(1-&gt;3)-beta-D-Gal-(1-&gt;4)-beta-D-GlcNAc-(1-&gt;3)-beta-D-Gal-(1-&gt;4)-beta-D-Glc-(1&lt;-&gt;1')-Cer + GDP + H(+)</text>
        <dbReference type="Rhea" id="RHEA:48368"/>
        <dbReference type="ChEBI" id="CHEBI:15378"/>
        <dbReference type="ChEBI" id="CHEBI:57273"/>
        <dbReference type="ChEBI" id="CHEBI:58189"/>
        <dbReference type="ChEBI" id="CHEBI:90357"/>
        <dbReference type="ChEBI" id="CHEBI:90360"/>
    </reaction>
    <physiologicalReaction direction="left-to-right" evidence="17">
        <dbReference type="Rhea" id="RHEA:48369"/>
    </physiologicalReaction>
</comment>
<comment type="catalytic activity">
    <reaction evidence="6">
        <text>a neolactoside nLc6Cer + GDP-beta-L-fucose = beta-D-galactosyl-(1-&gt;4)-N-acetyl-beta-D-glucosaminyl-(1-&gt;3)-beta-D-galactosyl-(1-&gt;4)-[alpha-L-fucosyl-(1-&gt;3)]-N-acetyl-beta-D-glucosaminyl-(1-&gt;3)-beta-D-galactosyl-(1-&gt;4)-beta-D-glucosyl-(1&lt;-&gt;1')-ceramide + GDP + H(+)</text>
        <dbReference type="Rhea" id="RHEA:48364"/>
        <dbReference type="ChEBI" id="CHEBI:15378"/>
        <dbReference type="ChEBI" id="CHEBI:57273"/>
        <dbReference type="ChEBI" id="CHEBI:58189"/>
        <dbReference type="ChEBI" id="CHEBI:90357"/>
        <dbReference type="ChEBI" id="CHEBI:90358"/>
    </reaction>
    <physiologicalReaction direction="left-to-right" evidence="17">
        <dbReference type="Rhea" id="RHEA:48365"/>
    </physiologicalReaction>
</comment>
<comment type="catalytic activity">
    <reaction evidence="6">
        <text>a neolactoside VI(3)-alpha-NeuNAc-nLc6Cer + GDP-beta-L-fucose = a neolactoside VI(3)-alpha-NeuAc,V(3)-alphaFuc-nLc6Cer + GDP + H(+)</text>
        <dbReference type="Rhea" id="RHEA:48356"/>
        <dbReference type="ChEBI" id="CHEBI:15378"/>
        <dbReference type="ChEBI" id="CHEBI:57273"/>
        <dbReference type="ChEBI" id="CHEBI:58189"/>
        <dbReference type="ChEBI" id="CHEBI:90336"/>
        <dbReference type="ChEBI" id="CHEBI:90339"/>
    </reaction>
    <physiologicalReaction direction="left-to-right" evidence="17">
        <dbReference type="Rhea" id="RHEA:48357"/>
    </physiologicalReaction>
</comment>
<comment type="catalytic activity">
    <reaction evidence="2 4 5 9 11 12">
        <text>beta-D-galactosyl-(1-&gt;4)-N-acetyl-D-glucosamine + GDP-beta-L-fucose = beta-D-galactosyl-(1-&gt;4)-[alpha-L-fucosyl-(1-&gt;3)]-N-acetyl-D-glucosamine + GDP + H(+)</text>
        <dbReference type="Rhea" id="RHEA:62824"/>
        <dbReference type="ChEBI" id="CHEBI:15378"/>
        <dbReference type="ChEBI" id="CHEBI:57273"/>
        <dbReference type="ChEBI" id="CHEBI:58189"/>
        <dbReference type="ChEBI" id="CHEBI:60152"/>
        <dbReference type="ChEBI" id="CHEBI:62287"/>
    </reaction>
    <physiologicalReaction direction="left-to-right" evidence="4">
        <dbReference type="Rhea" id="RHEA:62825"/>
    </physiologicalReaction>
</comment>
<comment type="catalytic activity">
    <reaction evidence="2 4 5 9 11 12">
        <text>N-acetyl-alpha-neuraminosyl-(2-&gt;3)-beta-D-galactosyl-(1-&gt;4)-N-acetyl-beta-D-glucosamine + GDP-beta-L-fucose = N-acetyl-alpha-neuraminosyl-(2-&gt;3)-beta-D-galactosyl-(1-&gt;4)-[alpha-L-fucosyl-(1-&gt;3)]-N-acetyl-beta-D-glucosamine + GDP + H(+)</text>
        <dbReference type="Rhea" id="RHEA:62836"/>
        <dbReference type="ChEBI" id="CHEBI:15378"/>
        <dbReference type="ChEBI" id="CHEBI:57273"/>
        <dbReference type="ChEBI" id="CHEBI:58189"/>
        <dbReference type="ChEBI" id="CHEBI:145937"/>
        <dbReference type="ChEBI" id="CHEBI:145938"/>
    </reaction>
    <physiologicalReaction direction="left-to-right" evidence="16">
        <dbReference type="Rhea" id="RHEA:62837"/>
    </physiologicalReaction>
</comment>
<comment type="catalytic activity">
    <reaction evidence="5">
        <text>lactose + GDP-beta-L-fucose = beta-D-galactosyl-(1-&gt;4)-[alpha-L-fucosyl-(1-&gt;3)]-D-glucose + GDP + H(+)</text>
        <dbReference type="Rhea" id="RHEA:62888"/>
        <dbReference type="ChEBI" id="CHEBI:15378"/>
        <dbReference type="ChEBI" id="CHEBI:17716"/>
        <dbReference type="ChEBI" id="CHEBI:57273"/>
        <dbReference type="ChEBI" id="CHEBI:58189"/>
        <dbReference type="ChEBI" id="CHEBI:90065"/>
    </reaction>
    <physiologicalReaction direction="left-to-right" evidence="16">
        <dbReference type="Rhea" id="RHEA:62889"/>
    </physiologicalReaction>
</comment>
<comment type="catalytic activity">
    <reaction evidence="5">
        <text>alpha-L-Fuc-(1-&gt;2)-beta-D-Gal-(1-&gt;4)-D-Glc + GDP-beta-L-fucose = alpha-L-Fuc-(1-&gt;2)-beta-D-Gal-(1-&gt;4)-[alpha-L-Fuc-(1-&gt;3)]-D-Glc + GDP + H(+)</text>
        <dbReference type="Rhea" id="RHEA:64016"/>
        <dbReference type="ChEBI" id="CHEBI:15378"/>
        <dbReference type="ChEBI" id="CHEBI:57273"/>
        <dbReference type="ChEBI" id="CHEBI:58189"/>
        <dbReference type="ChEBI" id="CHEBI:147155"/>
        <dbReference type="ChEBI" id="CHEBI:149659"/>
    </reaction>
    <physiologicalReaction direction="left-to-right" evidence="16">
        <dbReference type="Rhea" id="RHEA:64017"/>
    </physiologicalReaction>
</comment>
<comment type="catalytic activity">
    <reaction evidence="2">
        <text>a beta-D-galactosyl-(1-&gt;4)-N-acetyl-beta-D-6-sulfooxy-glucosaminyl derivative + GDP-beta-L-fucose = a beta-D-galactosyl-(1-&gt;4)-[alpha-L-fucosyl-(1-&gt;3)]-N-acetyl-beta-D-6-sulfooxy-glucosaminyl derivative + GDP + H(+)</text>
        <dbReference type="Rhea" id="RHEA:64032"/>
        <dbReference type="ChEBI" id="CHEBI:15378"/>
        <dbReference type="ChEBI" id="CHEBI:57273"/>
        <dbReference type="ChEBI" id="CHEBI:58189"/>
        <dbReference type="ChEBI" id="CHEBI:149663"/>
        <dbReference type="ChEBI" id="CHEBI:149664"/>
    </reaction>
</comment>
<comment type="pathway">
    <text evidence="8 11">Protein modification; protein glycosylation.</text>
</comment>
<comment type="subunit">
    <text evidence="12">Homodimer and monomer (PubMed:9451035). Monomer (secreted form) (PubMed:9451035).</text>
</comment>
<comment type="subcellular location">
    <subcellularLocation>
        <location>Golgi apparatus</location>
        <location>Golgi stack membrane</location>
        <topology>Single-pass type II membrane protein</topology>
    </subcellularLocation>
    <subcellularLocation>
        <location evidence="12">Golgi apparatus</location>
    </subcellularLocation>
    <subcellularLocation>
        <location evidence="12">Secreted</location>
    </subcellularLocation>
    <text>Membrane-bound form in trans cisternae of Golgi.</text>
</comment>
<comment type="alternative products">
    <event type="alternative splicing"/>
    <isoform>
        <id>P51993-1</id>
        <name>1</name>
        <sequence type="displayed"/>
    </isoform>
    <isoform>
        <id>P51993-2</id>
        <name>2</name>
        <sequence type="described" ref="VSP_001780"/>
    </isoform>
</comment>
<comment type="tissue specificity">
    <text>Kidney, liver, colon, small intestine, bladder, uterus and salivary gland.</text>
</comment>
<comment type="PTM">
    <text evidence="12">N-glycosylated.</text>
</comment>
<comment type="PTM">
    <text evidence="12">Proteolytic cleavage releases a secreted glycoform of 43 kDa.</text>
</comment>
<comment type="polymorphism">
    <text>Expression of alpha(1,3)-fucosyltransferase in plasma can vary among different populations. 9% of individuals on the isle of Java (Indonesia) do not express this enzyme. Ninety-five percent of plasma alpha(1,3)-fucosyltransferase-deficient individuals have Lewis negative phenotype on red cells, suggesting strong linkage disequilibrium between these two traits. Variations in FUT6 are responsible for plasma alpha(1,3)-fucosyltransferase deficiency [MIM:613852].</text>
</comment>
<comment type="similarity">
    <text evidence="15">Belongs to the glycosyltransferase 10 family.</text>
</comment>
<comment type="sequence caution" evidence="15">
    <conflict type="miscellaneous discrepancy">
        <sequence resource="EMBL-CDS" id="AAC50191"/>
    </conflict>
    <text>Probable cloning artifact.</text>
</comment>
<comment type="online information" name="Functional Glycomics Gateway - GTase">
    <link uri="http://www.functionalglycomics.org/glycomics/molecule/jsp/glycoEnzyme/viewGlycoEnzyme.jsp?gbpId=gt_hum_603"/>
    <text>Fucosyltransferase 6</text>
</comment>
<evidence type="ECO:0000255" key="1"/>
<evidence type="ECO:0000269" key="2">
    <source>
    </source>
</evidence>
<evidence type="ECO:0000269" key="3">
    <source>
    </source>
</evidence>
<evidence type="ECO:0000269" key="4">
    <source>
    </source>
</evidence>
<evidence type="ECO:0000269" key="5">
    <source>
    </source>
</evidence>
<evidence type="ECO:0000269" key="6">
    <source>
    </source>
</evidence>
<evidence type="ECO:0000269" key="7">
    <source>
    </source>
</evidence>
<evidence type="ECO:0000269" key="8">
    <source>
    </source>
</evidence>
<evidence type="ECO:0000269" key="9">
    <source>
    </source>
</evidence>
<evidence type="ECO:0000269" key="10">
    <source>
    </source>
</evidence>
<evidence type="ECO:0000269" key="11">
    <source>
    </source>
</evidence>
<evidence type="ECO:0000269" key="12">
    <source>
    </source>
</evidence>
<evidence type="ECO:0000269" key="13">
    <source ref="4"/>
</evidence>
<evidence type="ECO:0000303" key="14">
    <source>
    </source>
</evidence>
<evidence type="ECO:0000305" key="15"/>
<evidence type="ECO:0000305" key="16">
    <source>
    </source>
</evidence>
<evidence type="ECO:0000305" key="17">
    <source>
    </source>
</evidence>
<evidence type="ECO:0000305" key="18">
    <source>
    </source>
</evidence>
<evidence type="ECO:0000312" key="19">
    <source>
        <dbReference type="HGNC" id="HGNC:4017"/>
    </source>
</evidence>
<proteinExistence type="evidence at protein level"/>
<name>FUT6_HUMAN</name>
<accession>P51993</accession>
<accession>A6NEX0</accession>
<accession>D6W637</accession>
<accession>Q9UND8</accession>
<sequence>MDPLGPAKPQWSWRCCLTTLLFQLLMAVCFFSYLRVSQDDPTVYPNGSRFPDSTGTPAHSIPLILLWTWPFNKPIALPRCSEMVPGTADCNITADRKVYPQADAVIVHHREVMYNPSAQLPRSPRRQGQRWIWFSMESPSHCWQLKAMDGYFNLTMSYRSDSDIFTPYGWLEPWSGQPAHPPLNLSAKTELVAWAVSNWGPNSARVRYYQSLQAHLKVDVYGRSHKPLPQGTMMETLSRYKFYLAFENSLHPDYITEKLWRNALEAWAVPVVLGPSRSNYERFLPPDAFIHVDDFQSPKDLARYLQELDKDHARYLSYFRWRETLRPRSFSWALAFCKACWKLQEESRYQTRGIAAWFT</sequence>
<reference key="1">
    <citation type="journal article" date="1992" name="Biochem. Biophys. Res. Commun.">
        <title>The cloning and expression of a human alpha-1,3 fucosyltransferase capable of forming the E-selectin ligand.</title>
        <authorList>
            <person name="Koszdin K.L."/>
            <person name="Bowen B.R."/>
        </authorList>
    </citation>
    <scope>NUCLEOTIDE SEQUENCE [MRNA] (ISOFORM 1)</scope>
    <scope>FUNCTION</scope>
    <scope>CATALYTIC ACTIVITY</scope>
</reference>
<reference key="2">
    <citation type="journal article" date="1992" name="J. Biol. Chem.">
        <title>Molecular cloning of a fourth member of a human alpha (1,3)fucosyltransferase gene family. Multiple homologous sequences that determine expression of the Lewis x, sialyl Lewis x, and difucosyl sialyl Lewis x epitopes.</title>
        <authorList>
            <person name="Weston B.W."/>
            <person name="Smith P.L."/>
            <person name="Kelly R.J."/>
            <person name="Lowe J.B."/>
        </authorList>
    </citation>
    <scope>NUCLEOTIDE SEQUENCE [GENOMIC DNA] (ISOFORM 1)</scope>
    <scope>FUNCTION</scope>
    <scope>CATALYTIC ACTIVITY</scope>
</reference>
<reference key="3">
    <citation type="journal article" date="1995" name="J. Biol. Chem.">
        <title>Expression of human chromosome 19p alpha(1,3)-fucosyltransferase genes in normal tissues. Alternative splicing, polyadenylation, and isoforms.</title>
        <authorList>
            <person name="Cameron H.S."/>
            <person name="Szczepaniak D."/>
            <person name="Weston B.W."/>
        </authorList>
    </citation>
    <scope>NUCLEOTIDE SEQUENCE [MRNA] (ISOFORMS 1 AND 2)</scope>
    <scope>FUNCTION</scope>
    <scope>CATALYTIC ACTIVITY</scope>
    <source>
        <tissue>Kidney</tissue>
    </source>
</reference>
<reference key="4">
    <citation type="submission" date="1999-02" db="EMBL/GenBank/DDBJ databases">
        <title>Isolation and expression of human alpha-(1,3)-fucosyltransferase.</title>
        <authorList>
            <person name="Rahim I."/>
            <person name="Schmidt L.R."/>
            <person name="Wahl D."/>
            <person name="Drayson E."/>
            <person name="Maslanik W."/>
            <person name="Stranahan P.L."/>
            <person name="Pettijohn D.E."/>
        </authorList>
    </citation>
    <scope>NUCLEOTIDE SEQUENCE [MRNA] (ISOFORM 1)</scope>
    <scope>VARIANT SER-124</scope>
    <source>
        <tissue>Squamous cell carcinoma</tissue>
    </source>
</reference>
<reference key="5">
    <citation type="journal article" date="2004" name="Nature">
        <title>The DNA sequence and biology of human chromosome 19.</title>
        <authorList>
            <person name="Grimwood J."/>
            <person name="Gordon L.A."/>
            <person name="Olsen A.S."/>
            <person name="Terry A."/>
            <person name="Schmutz J."/>
            <person name="Lamerdin J.E."/>
            <person name="Hellsten U."/>
            <person name="Goodstein D."/>
            <person name="Couronne O."/>
            <person name="Tran-Gyamfi M."/>
            <person name="Aerts A."/>
            <person name="Altherr M."/>
            <person name="Ashworth L."/>
            <person name="Bajorek E."/>
            <person name="Black S."/>
            <person name="Branscomb E."/>
            <person name="Caenepeel S."/>
            <person name="Carrano A.V."/>
            <person name="Caoile C."/>
            <person name="Chan Y.M."/>
            <person name="Christensen M."/>
            <person name="Cleland C.A."/>
            <person name="Copeland A."/>
            <person name="Dalin E."/>
            <person name="Dehal P."/>
            <person name="Denys M."/>
            <person name="Detter J.C."/>
            <person name="Escobar J."/>
            <person name="Flowers D."/>
            <person name="Fotopulos D."/>
            <person name="Garcia C."/>
            <person name="Georgescu A.M."/>
            <person name="Glavina T."/>
            <person name="Gomez M."/>
            <person name="Gonzales E."/>
            <person name="Groza M."/>
            <person name="Hammon N."/>
            <person name="Hawkins T."/>
            <person name="Haydu L."/>
            <person name="Ho I."/>
            <person name="Huang W."/>
            <person name="Israni S."/>
            <person name="Jett J."/>
            <person name="Kadner K."/>
            <person name="Kimball H."/>
            <person name="Kobayashi A."/>
            <person name="Larionov V."/>
            <person name="Leem S.-H."/>
            <person name="Lopez F."/>
            <person name="Lou Y."/>
            <person name="Lowry S."/>
            <person name="Malfatti S."/>
            <person name="Martinez D."/>
            <person name="McCready P.M."/>
            <person name="Medina C."/>
            <person name="Morgan J."/>
            <person name="Nelson K."/>
            <person name="Nolan M."/>
            <person name="Ovcharenko I."/>
            <person name="Pitluck S."/>
            <person name="Pollard M."/>
            <person name="Popkie A.P."/>
            <person name="Predki P."/>
            <person name="Quan G."/>
            <person name="Ramirez L."/>
            <person name="Rash S."/>
            <person name="Retterer J."/>
            <person name="Rodriguez A."/>
            <person name="Rogers S."/>
            <person name="Salamov A."/>
            <person name="Salazar A."/>
            <person name="She X."/>
            <person name="Smith D."/>
            <person name="Slezak T."/>
            <person name="Solovyev V."/>
            <person name="Thayer N."/>
            <person name="Tice H."/>
            <person name="Tsai M."/>
            <person name="Ustaszewska A."/>
            <person name="Vo N."/>
            <person name="Wagner M."/>
            <person name="Wheeler J."/>
            <person name="Wu K."/>
            <person name="Xie G."/>
            <person name="Yang J."/>
            <person name="Dubchak I."/>
            <person name="Furey T.S."/>
            <person name="DeJong P."/>
            <person name="Dickson M."/>
            <person name="Gordon D."/>
            <person name="Eichler E.E."/>
            <person name="Pennacchio L.A."/>
            <person name="Richardson P."/>
            <person name="Stubbs L."/>
            <person name="Rokhsar D.S."/>
            <person name="Myers R.M."/>
            <person name="Rubin E.M."/>
            <person name="Lucas S.M."/>
        </authorList>
    </citation>
    <scope>NUCLEOTIDE SEQUENCE [LARGE SCALE GENOMIC DNA]</scope>
</reference>
<reference key="6">
    <citation type="submission" date="2005-09" db="EMBL/GenBank/DDBJ databases">
        <authorList>
            <person name="Mural R.J."/>
            <person name="Istrail S."/>
            <person name="Sutton G.G."/>
            <person name="Florea L."/>
            <person name="Halpern A.L."/>
            <person name="Mobarry C.M."/>
            <person name="Lippert R."/>
            <person name="Walenz B."/>
            <person name="Shatkay H."/>
            <person name="Dew I."/>
            <person name="Miller J.R."/>
            <person name="Flanigan M.J."/>
            <person name="Edwards N.J."/>
            <person name="Bolanos R."/>
            <person name="Fasulo D."/>
            <person name="Halldorsson B.V."/>
            <person name="Hannenhalli S."/>
            <person name="Turner R."/>
            <person name="Yooseph S."/>
            <person name="Lu F."/>
            <person name="Nusskern D.R."/>
            <person name="Shue B.C."/>
            <person name="Zheng X.H."/>
            <person name="Zhong F."/>
            <person name="Delcher A.L."/>
            <person name="Huson D.H."/>
            <person name="Kravitz S.A."/>
            <person name="Mouchard L."/>
            <person name="Reinert K."/>
            <person name="Remington K.A."/>
            <person name="Clark A.G."/>
            <person name="Waterman M.S."/>
            <person name="Eichler E.E."/>
            <person name="Adams M.D."/>
            <person name="Hunkapiller M.W."/>
            <person name="Myers E.W."/>
            <person name="Venter J.C."/>
        </authorList>
    </citation>
    <scope>NUCLEOTIDE SEQUENCE [LARGE SCALE GENOMIC DNA]</scope>
</reference>
<reference key="7">
    <citation type="journal article" date="1998" name="Glycobiology">
        <title>Trafficking and localization studies of recombinant alpha1, 3-fucosyltransferase VI stably expressed in CHO cells.</title>
        <authorList>
            <person name="Borsig L."/>
            <person name="Katopodis A.G."/>
            <person name="Bowen B.R."/>
            <person name="Berger E.G."/>
        </authorList>
    </citation>
    <scope>PARTIAL PROTEIN SEQUENCE</scope>
    <scope>SUBCELLULAR LOCATION</scope>
    <scope>GLYCOSYLATION</scope>
    <scope>PROTEOLYTIC CLEAVAGE</scope>
    <scope>FUNCTION</scope>
    <scope>CATALYTIC ACTIVITY</scope>
</reference>
<reference key="8">
    <citation type="journal article" date="1997" name="Glycobiology">
        <title>Acceptor specificity of GDP-Fuc:Gal beta 1--&gt;4GlcNAc-R alpha 3-fucosyltransferase VI (FucT VI) expressed in insect cells as soluble, secreted enzyme.</title>
        <authorList>
            <person name="De Vries T."/>
            <person name="Palcic M.P."/>
            <person name="Schoenmakers P.S."/>
            <person name="Van Den Eijnden D.H."/>
            <person name="Joziasse D.H."/>
        </authorList>
    </citation>
    <scope>CATALYTIC ACTIVITY</scope>
    <scope>FUNCTION</scope>
</reference>
<reference key="9">
    <citation type="journal article" date="2000" name="Cancer Res.">
        <title>Expression of sialyl 6-sulfo Lewis X is inversely correlated with conventional sialyl Lewis X expression in human colorectal cancer.</title>
        <authorList>
            <person name="Izawa M."/>
            <person name="Kumamoto K."/>
            <person name="Mitsuoka C."/>
            <person name="Kanamori C."/>
            <person name="Kanamori A."/>
            <person name="Ohmori K."/>
            <person name="Ishida H."/>
            <person name="Nakamura S."/>
            <person name="Kurata-Miura K."/>
            <person name="Sasaki K."/>
            <person name="Nishi T."/>
            <person name="Kannagi R."/>
        </authorList>
    </citation>
    <scope>FUNCTION</scope>
    <scope>CATALYTIC ACTIVITY</scope>
</reference>
<reference key="10">
    <citation type="journal article" date="2007" name="J. Biol. Chem.">
        <title>Site-specific fucosylation of sialylated polylactosamines by alpha1,3/4-fucosyltransferases-V and -VI Is defined by amino acids near the N terminus of the catalytic domain.</title>
        <authorList>
            <person name="Shetterly S."/>
            <person name="Jost F."/>
            <person name="Watson S.R."/>
            <person name="Knegtel R."/>
            <person name="Macher B.A."/>
            <person name="Holmes E.H."/>
        </authorList>
    </citation>
    <scope>CATALYTIC ACTIVITY</scope>
    <scope>FUNCTION</scope>
    <scope>REGION</scope>
    <scope>MUTAGENESIS OF LYS-73; ARG-110; GLU-111 AND VAL-112</scope>
</reference>
<reference key="11">
    <citation type="journal article" date="2018" name="J. Biol. Chem.">
        <title>Distinct human alpha(1,3)-fucosyltransferases drive Lewis-X/sialyl Lewis-X assembly in human cells.</title>
        <authorList>
            <person name="Mondal N."/>
            <person name="Dykstra B."/>
            <person name="Lee J."/>
            <person name="Ashline D.J."/>
            <person name="Reinhold V.N."/>
            <person name="Rossi D.J."/>
            <person name="Sackstein R."/>
        </authorList>
    </citation>
    <scope>FUNCTION</scope>
    <scope>CATALYTIC ACTIVITY</scope>
    <scope>PATHWAY</scope>
</reference>
<reference key="12">
    <citation type="journal article" date="1994" name="J. Biol. Chem.">
        <title>Molecular basis for plasma alpha(1,3)-fucosyltransferase gene deficiency (FUT6).</title>
        <authorList>
            <person name="Mollicone R."/>
            <person name="Reguigne I."/>
            <person name="Fletcher A."/>
            <person name="Aziz A."/>
            <person name="Rustam M."/>
            <person name="Weston B.W."/>
            <person name="Kelly R.J."/>
            <person name="Lowe J.B."/>
            <person name="Oriol R."/>
        </authorList>
    </citation>
    <scope>POLYMORPHISM</scope>
    <scope>VARIANT LYS-247</scope>
    <scope>CHARACTERIZATION OF VARIANT LYS-247</scope>
</reference>
<reference key="13">
    <citation type="journal article" date="2000" name="Hum. Mutat.">
        <title>Identification of two functionally deficient plasma alpha 3-fucosyltransferase (FUT6) alleles.</title>
        <authorList>
            <person name="Elmgren A."/>
            <person name="Borjeson C."/>
            <person name="Mollicone R."/>
            <person name="Oriol R."/>
            <person name="Fletcher A."/>
            <person name="Larson G."/>
        </authorList>
    </citation>
    <scope>VARIANTS SER-124; VAL-244; LYS-247 AND GLY-303</scope>
    <scope>CHARACTERIZATION OF VARIANTS SER-124; VAL-244; LYS-247 AND GLY-303</scope>
</reference>
<reference key="14">
    <citation type="journal article" date="2016" name="Nature">
        <title>Analysis of protein-coding genetic variation in 60,706 humans.</title>
        <authorList>
            <consortium name="Exome Aggregation Consortium"/>
            <person name="Lek M."/>
            <person name="Karczewski K.J."/>
            <person name="Minikel E.V."/>
            <person name="Samocha K.E."/>
            <person name="Banks E."/>
            <person name="Fennell T."/>
            <person name="O'Donnell-Luria A.H."/>
            <person name="Ware J.S."/>
            <person name="Hill A.J."/>
            <person name="Cummings B.B."/>
            <person name="Tukiainen T."/>
            <person name="Birnbaum D.P."/>
            <person name="Kosmicki J.A."/>
            <person name="Duncan L.E."/>
            <person name="Estrada K."/>
            <person name="Zhao F."/>
            <person name="Zou J."/>
            <person name="Pierce-Hoffman E."/>
            <person name="Berghout J."/>
            <person name="Cooper D.N."/>
            <person name="Deflaux N."/>
            <person name="DePristo M."/>
            <person name="Do R."/>
            <person name="Flannick J."/>
            <person name="Fromer M."/>
            <person name="Gauthier L."/>
            <person name="Goldstein J."/>
            <person name="Gupta N."/>
            <person name="Howrigan D."/>
            <person name="Kiezun A."/>
            <person name="Kurki M.I."/>
            <person name="Moonshine A.L."/>
            <person name="Natarajan P."/>
            <person name="Orozco L."/>
            <person name="Peloso G.M."/>
            <person name="Poplin R."/>
            <person name="Rivas M.A."/>
            <person name="Ruano-Rubio V."/>
            <person name="Rose S.A."/>
            <person name="Ruderfer D.M."/>
            <person name="Shakir K."/>
            <person name="Stenson P.D."/>
            <person name="Stevens C."/>
            <person name="Thomas B.P."/>
            <person name="Tiao G."/>
            <person name="Tusie-Luna M.T."/>
            <person name="Weisburd B."/>
            <person name="Won H.H."/>
            <person name="Yu D."/>
            <person name="Altshuler D.M."/>
            <person name="Ardissino D."/>
            <person name="Boehnke M."/>
            <person name="Danesh J."/>
            <person name="Donnelly S."/>
            <person name="Elosua R."/>
            <person name="Florez J.C."/>
            <person name="Gabriel S.B."/>
            <person name="Getz G."/>
            <person name="Glatt S.J."/>
            <person name="Hultman C.M."/>
            <person name="Kathiresan S."/>
            <person name="Laakso M."/>
            <person name="McCarroll S."/>
            <person name="McCarthy M.I."/>
            <person name="McGovern D."/>
            <person name="McPherson R."/>
            <person name="Neale B.M."/>
            <person name="Palotie A."/>
            <person name="Purcell S.M."/>
            <person name="Saleheen D."/>
            <person name="Scharf J.M."/>
            <person name="Sklar P."/>
            <person name="Sullivan P.F."/>
            <person name="Tuomilehto J."/>
            <person name="Tsuang M.T."/>
            <person name="Watkins H.C."/>
            <person name="Wilson J.G."/>
            <person name="Daly M.J."/>
            <person name="MacArthur D.G."/>
        </authorList>
    </citation>
    <scope>VARIANTS SER-124; LYS-247 AND GLY-303</scope>
</reference>
<feature type="chain" id="PRO_0000221110" description="4-galactosyl-N-acetylglucosaminide 3-alpha-L-fucosyltransferase FUT6">
    <location>
        <begin position="1"/>
        <end position="359"/>
    </location>
</feature>
<feature type="topological domain" description="Cytoplasmic" evidence="1">
    <location>
        <begin position="1"/>
        <end position="14"/>
    </location>
</feature>
<feature type="transmembrane region" description="Helical; Signal-anchor for type II membrane protein" evidence="1">
    <location>
        <begin position="15"/>
        <end position="34"/>
    </location>
</feature>
<feature type="topological domain" description="Lumenal" evidence="1">
    <location>
        <begin position="35"/>
        <end position="359"/>
    </location>
</feature>
<feature type="region of interest" description="determines site-specific fucosylation" evidence="6">
    <location>
        <begin position="73"/>
        <end position="112"/>
    </location>
</feature>
<feature type="glycosylation site" description="N-linked (GlcNAc...) asparagine" evidence="1">
    <location>
        <position position="46"/>
    </location>
</feature>
<feature type="glycosylation site" description="N-linked (GlcNAc...) asparagine" evidence="1">
    <location>
        <position position="91"/>
    </location>
</feature>
<feature type="glycosylation site" description="N-linked (GlcNAc...) asparagine" evidence="1">
    <location>
        <position position="153"/>
    </location>
</feature>
<feature type="glycosylation site" description="N-linked (GlcNAc...) asparagine" evidence="1">
    <location>
        <position position="184"/>
    </location>
</feature>
<feature type="splice variant" id="VSP_001780" description="In isoform 2." evidence="14">
    <original>RYQTRGIAAWFT</original>
    <variation>SGGLIYLRTRLPEASPA</variation>
    <location>
        <begin position="348"/>
        <end position="359"/>
    </location>
</feature>
<feature type="sequence variant" id="VAR_024463" description="Found in individuals with plasma alpha(1,3)-fucosyltransferase deficiency and no clinically relevant phenotype; results in partial enzyme inactivation; complete enzyme inactivation when associated with V-244 and G-303; dbSNP:rs778805." evidence="3 7 13">
    <original>P</original>
    <variation>S</variation>
    <location>
        <position position="124"/>
    </location>
</feature>
<feature type="sequence variant" id="VAR_024464" description="In dbSNP:rs364637.">
    <original>Q</original>
    <variation>K</variation>
    <location>
        <position position="230"/>
    </location>
</feature>
<feature type="sequence variant" id="VAR_065915" description="Found in individuals with plasma alpha(1,3)-fucosyltransferase deficiency and no clinically relevant phenotype; complete enzyme inactivation when associated with S-124 and G-303." evidence="3">
    <original>L</original>
    <variation>V</variation>
    <location>
        <position position="244"/>
    </location>
</feature>
<feature type="sequence variant" id="VAR_065916" description="Found in individuals with plasma alpha(1,3)-fucosyltransferase deficiency and no clinically relevant phenotype; complete enzyme inactivation; dbSNP:rs17855739." evidence="3 7 10">
    <original>E</original>
    <variation>K</variation>
    <location>
        <position position="247"/>
    </location>
</feature>
<feature type="sequence variant" id="VAR_065917" description="Found in individuals with plasma alpha(1,3)-fucosyltransferase deficiency and no clinically relevant phenotype; complete enzyme inactivation when associated with S-124 and V-244; dbSNP:rs61147939." evidence="3 7">
    <original>R</original>
    <variation>G</variation>
    <location>
        <position position="303"/>
    </location>
</feature>
<feature type="mutagenesis site" description="Loss of site-specific fucosylation leading to generation of approximately equal amounts of VIM2 and sialyl-lewis x. Reverse the site-specific fucosylation pattern leading to generation of VIM2 predominantly instead of sialyl-lewis x; when associated with W-110; D-111 and I-112. Increases VIM2 glycolipid product; when associated with W-110; D-111 and I-112." evidence="6">
    <original>K</original>
    <variation>T</variation>
    <location>
        <position position="73"/>
    </location>
</feature>
<feature type="mutagenesis site" description="Reduces dramatically alpha(1,3)fucosyltransferase activity towards type 2 chain acceptors. Loss of site-specific fucosylation leading to generation of approximately equal amounts of VIM2 and sialyl-lewis x. Reverse the site-specific fucosylation pattern leading to generation of VIM2 predominantly instead of sialyl-lewis x; when associated with T-73; D-111 and I-112. Increases VIM2 glycolipid product; when associated with T-73; D-111 and I-112." evidence="6">
    <original>R</original>
    <variation>W</variation>
    <location>
        <position position="110"/>
    </location>
</feature>
<feature type="mutagenesis site" description="Reverse the site-specific fucosylation pattern leading to generation of VIM2 predominantly instead of sialyl-lewis x; when associated with T-73; W-110 and I-112. Increases VIM2 glycolipid product; when associated with T-73; W-110 and I-112." evidence="6">
    <original>E</original>
    <variation>D</variation>
    <location>
        <position position="111"/>
    </location>
</feature>
<feature type="mutagenesis site" description="Reverse the site-specific fucosylation pattern leading to generation of VIM2 predominantly instead of sialyl-lewis x; when associated with T-73; W-110 and D-111. Increases VIM2 glycolipid product; when associated with T-73; W-110 and D-111." evidence="6">
    <original>V</original>
    <variation>I</variation>
    <location>
        <position position="112"/>
    </location>
</feature>
<protein>
    <recommendedName>
        <fullName evidence="15">4-galactosyl-N-acetylglucosaminide 3-alpha-L-fucosyltransferase FUT6</fullName>
        <ecNumber evidence="6 11">2.4.1.152</ecNumber>
    </recommendedName>
    <alternativeName>
        <fullName>Fucosyltransferase 6</fullName>
    </alternativeName>
    <alternativeName>
        <fullName>Fucosyltransferase VI</fullName>
        <shortName>Fuc-TVI</shortName>
        <shortName>FucT-VI</shortName>
    </alternativeName>
    <alternativeName>
        <fullName>Galactoside 3-L-fucosyltransferase</fullName>
    </alternativeName>
</protein>
<organism>
    <name type="scientific">Homo sapiens</name>
    <name type="common">Human</name>
    <dbReference type="NCBI Taxonomy" id="9606"/>
    <lineage>
        <taxon>Eukaryota</taxon>
        <taxon>Metazoa</taxon>
        <taxon>Chordata</taxon>
        <taxon>Craniata</taxon>
        <taxon>Vertebrata</taxon>
        <taxon>Euteleostomi</taxon>
        <taxon>Mammalia</taxon>
        <taxon>Eutheria</taxon>
        <taxon>Euarchontoglires</taxon>
        <taxon>Primates</taxon>
        <taxon>Haplorrhini</taxon>
        <taxon>Catarrhini</taxon>
        <taxon>Hominidae</taxon>
        <taxon>Homo</taxon>
    </lineage>
</organism>
<dbReference type="EC" id="2.4.1.152" evidence="6 11"/>
<dbReference type="EMBL" id="M98825">
    <property type="protein sequence ID" value="AAA99222.1"/>
    <property type="molecule type" value="mRNA"/>
</dbReference>
<dbReference type="EMBL" id="L01698">
    <property type="protein sequence ID" value="AAB03078.1"/>
    <property type="molecule type" value="Genomic_DNA"/>
</dbReference>
<dbReference type="EMBL" id="U27331">
    <property type="protein sequence ID" value="AAC50190.1"/>
    <property type="molecule type" value="mRNA"/>
</dbReference>
<dbReference type="EMBL" id="U27332">
    <property type="protein sequence ID" value="AAC50191.1"/>
    <property type="status" value="ALT_SEQ"/>
    <property type="molecule type" value="mRNA"/>
</dbReference>
<dbReference type="EMBL" id="U27333">
    <property type="protein sequence ID" value="AAC50192.1"/>
    <property type="molecule type" value="mRNA"/>
</dbReference>
<dbReference type="EMBL" id="U27334">
    <property type="protein sequence ID" value="AAC50193.1"/>
    <property type="molecule type" value="mRNA"/>
</dbReference>
<dbReference type="EMBL" id="U27335">
    <property type="protein sequence ID" value="AAC50194.1"/>
    <property type="molecule type" value="mRNA"/>
</dbReference>
<dbReference type="EMBL" id="U27336">
    <property type="protein sequence ID" value="AAC50195.1"/>
    <property type="molecule type" value="mRNA"/>
</dbReference>
<dbReference type="EMBL" id="U27337">
    <property type="protein sequence ID" value="AAC50196.1"/>
    <property type="molecule type" value="mRNA"/>
</dbReference>
<dbReference type="EMBL" id="AF131211">
    <property type="protein sequence ID" value="AAD33509.1"/>
    <property type="molecule type" value="mRNA"/>
</dbReference>
<dbReference type="EMBL" id="AL031258">
    <property type="status" value="NOT_ANNOTATED_CDS"/>
    <property type="molecule type" value="Genomic_DNA"/>
</dbReference>
<dbReference type="EMBL" id="CH471139">
    <property type="protein sequence ID" value="EAW69136.1"/>
    <property type="molecule type" value="Genomic_DNA"/>
</dbReference>
<dbReference type="EMBL" id="CH471139">
    <property type="protein sequence ID" value="EAW69137.1"/>
    <property type="molecule type" value="Genomic_DNA"/>
</dbReference>
<dbReference type="EMBL" id="CH471139">
    <property type="protein sequence ID" value="EAW69138.1"/>
    <property type="molecule type" value="Genomic_DNA"/>
</dbReference>
<dbReference type="EMBL" id="CH471139">
    <property type="protein sequence ID" value="EAW69139.1"/>
    <property type="molecule type" value="Genomic_DNA"/>
</dbReference>
<dbReference type="CCDS" id="CCDS12152.1">
    <molecule id="P51993-1"/>
</dbReference>
<dbReference type="PIR" id="A45156">
    <property type="entry name" value="A45156"/>
</dbReference>
<dbReference type="PIR" id="I39048">
    <property type="entry name" value="I39048"/>
</dbReference>
<dbReference type="PIR" id="I39049">
    <property type="entry name" value="I39049"/>
</dbReference>
<dbReference type="RefSeq" id="NP_000141.1">
    <molecule id="P51993-1"/>
    <property type="nucleotide sequence ID" value="NM_000150.4"/>
</dbReference>
<dbReference type="RefSeq" id="NP_001035791.1">
    <molecule id="P51993-1"/>
    <property type="nucleotide sequence ID" value="NM_001040701.2"/>
</dbReference>
<dbReference type="RefSeq" id="NP_001356431.1">
    <molecule id="P51993-1"/>
    <property type="nucleotide sequence ID" value="NM_001369502.1"/>
</dbReference>
<dbReference type="RefSeq" id="NP_001356433.1">
    <molecule id="P51993-1"/>
    <property type="nucleotide sequence ID" value="NM_001369504.1"/>
</dbReference>
<dbReference type="RefSeq" id="NP_001356434.1">
    <molecule id="P51993-1"/>
    <property type="nucleotide sequence ID" value="NM_001369505.1"/>
</dbReference>
<dbReference type="RefSeq" id="NP_001368884.1">
    <molecule id="P51993-1"/>
    <property type="nucleotide sequence ID" value="NM_001381955.1"/>
</dbReference>
<dbReference type="RefSeq" id="NP_001368885.1">
    <molecule id="P51993-1"/>
    <property type="nucleotide sequence ID" value="NM_001381956.1"/>
</dbReference>
<dbReference type="RefSeq" id="XP_005259583.1">
    <property type="nucleotide sequence ID" value="XM_005259526.4"/>
</dbReference>
<dbReference type="RefSeq" id="XP_011526170.1">
    <property type="nucleotide sequence ID" value="XM_011527868.2"/>
</dbReference>
<dbReference type="RefSeq" id="XP_011526171.1">
    <property type="nucleotide sequence ID" value="XM_011527869.2"/>
</dbReference>
<dbReference type="RefSeq" id="XP_011526172.1">
    <property type="nucleotide sequence ID" value="XM_011527870.2"/>
</dbReference>
<dbReference type="RefSeq" id="XP_011526174.1">
    <property type="nucleotide sequence ID" value="XM_011527872.2"/>
</dbReference>
<dbReference type="RefSeq" id="XP_011526175.1">
    <property type="nucleotide sequence ID" value="XM_011527873.2"/>
</dbReference>
<dbReference type="RefSeq" id="XP_011526176.1">
    <property type="nucleotide sequence ID" value="XM_011527874.2"/>
</dbReference>
<dbReference type="RefSeq" id="XP_011526177.1">
    <property type="nucleotide sequence ID" value="XM_011527875.2"/>
</dbReference>
<dbReference type="RefSeq" id="XP_011526178.1">
    <property type="nucleotide sequence ID" value="XM_011527876.2"/>
</dbReference>
<dbReference type="RefSeq" id="XP_011526180.1">
    <property type="nucleotide sequence ID" value="XM_011527878.2"/>
</dbReference>
<dbReference type="RefSeq" id="XP_011526181.1">
    <property type="nucleotide sequence ID" value="XM_011527879.2"/>
</dbReference>
<dbReference type="RefSeq" id="XP_047294509.1">
    <molecule id="P51993-1"/>
    <property type="nucleotide sequence ID" value="XM_047438553.1"/>
</dbReference>
<dbReference type="RefSeq" id="XP_047294510.1">
    <molecule id="P51993-1"/>
    <property type="nucleotide sequence ID" value="XM_047438554.1"/>
</dbReference>
<dbReference type="RefSeq" id="XP_047294511.1">
    <molecule id="P51993-1"/>
    <property type="nucleotide sequence ID" value="XM_047438555.1"/>
</dbReference>
<dbReference type="RefSeq" id="XP_047294512.1">
    <molecule id="P51993-1"/>
    <property type="nucleotide sequence ID" value="XM_047438556.1"/>
</dbReference>
<dbReference type="RefSeq" id="XP_047294513.1">
    <molecule id="P51993-1"/>
    <property type="nucleotide sequence ID" value="XM_047438557.1"/>
</dbReference>
<dbReference type="RefSeq" id="XP_047294514.1">
    <molecule id="P51993-1"/>
    <property type="nucleotide sequence ID" value="XM_047438558.1"/>
</dbReference>
<dbReference type="RefSeq" id="XP_047294515.1">
    <molecule id="P51993-1"/>
    <property type="nucleotide sequence ID" value="XM_047438559.1"/>
</dbReference>
<dbReference type="RefSeq" id="XP_054176405.1">
    <molecule id="P51993-1"/>
    <property type="nucleotide sequence ID" value="XM_054320430.1"/>
</dbReference>
<dbReference type="RefSeq" id="XP_054176406.1">
    <molecule id="P51993-1"/>
    <property type="nucleotide sequence ID" value="XM_054320431.1"/>
</dbReference>
<dbReference type="RefSeq" id="XP_054176407.1">
    <molecule id="P51993-1"/>
    <property type="nucleotide sequence ID" value="XM_054320432.1"/>
</dbReference>
<dbReference type="RefSeq" id="XP_054176408.1">
    <molecule id="P51993-1"/>
    <property type="nucleotide sequence ID" value="XM_054320433.1"/>
</dbReference>
<dbReference type="RefSeq" id="XP_054176409.1">
    <molecule id="P51993-1"/>
    <property type="nucleotide sequence ID" value="XM_054320434.1"/>
</dbReference>
<dbReference type="RefSeq" id="XP_054176410.1">
    <molecule id="P51993-1"/>
    <property type="nucleotide sequence ID" value="XM_054320435.1"/>
</dbReference>
<dbReference type="RefSeq" id="XP_054176411.1">
    <molecule id="P51993-1"/>
    <property type="nucleotide sequence ID" value="XM_054320436.1"/>
</dbReference>
<dbReference type="RefSeq" id="XP_054176412.1">
    <molecule id="P51993-1"/>
    <property type="nucleotide sequence ID" value="XM_054320437.1"/>
</dbReference>
<dbReference type="RefSeq" id="XP_054176413.1">
    <molecule id="P51993-1"/>
    <property type="nucleotide sequence ID" value="XM_054320438.1"/>
</dbReference>
<dbReference type="RefSeq" id="XP_054176414.1">
    <molecule id="P51993-1"/>
    <property type="nucleotide sequence ID" value="XM_054320439.1"/>
</dbReference>
<dbReference type="RefSeq" id="XP_054176415.1">
    <molecule id="P51993-1"/>
    <property type="nucleotide sequence ID" value="XM_054320440.1"/>
</dbReference>
<dbReference type="RefSeq" id="XP_054189233.1">
    <molecule id="P51993-1"/>
    <property type="nucleotide sequence ID" value="XM_054333258.1"/>
</dbReference>
<dbReference type="RefSeq" id="XP_054189234.1">
    <molecule id="P51993-1"/>
    <property type="nucleotide sequence ID" value="XM_054333259.1"/>
</dbReference>
<dbReference type="SMR" id="P51993"/>
<dbReference type="FunCoup" id="P51993">
    <property type="interactions" value="125"/>
</dbReference>
<dbReference type="STRING" id="9606.ENSP00000286955"/>
<dbReference type="BindingDB" id="P51993"/>
<dbReference type="ChEMBL" id="CHEMBL4443"/>
<dbReference type="SwissLipids" id="SLP:000001436">
    <molecule id="P51993-1"/>
</dbReference>
<dbReference type="CAZy" id="GT10">
    <property type="family name" value="Glycosyltransferase Family 10"/>
</dbReference>
<dbReference type="GlyCosmos" id="P51993">
    <property type="glycosylation" value="4 sites, No reported glycans"/>
</dbReference>
<dbReference type="GlyGen" id="P51993">
    <property type="glycosylation" value="5 sites, 8 N-linked glycans (1 site)"/>
</dbReference>
<dbReference type="iPTMnet" id="P51993"/>
<dbReference type="PhosphoSitePlus" id="P51993"/>
<dbReference type="BioMuta" id="FUT6"/>
<dbReference type="DMDM" id="1730136"/>
<dbReference type="jPOST" id="P51993"/>
<dbReference type="MassIVE" id="P51993"/>
<dbReference type="PaxDb" id="9606-ENSP00000313398"/>
<dbReference type="PeptideAtlas" id="P51993"/>
<dbReference type="PRIDE" id="P51993"/>
<dbReference type="ProteomicsDB" id="56467">
    <molecule id="P51993-1"/>
</dbReference>
<dbReference type="ProteomicsDB" id="56468">
    <molecule id="P51993-2"/>
</dbReference>
<dbReference type="Pumba" id="P51993"/>
<dbReference type="Antibodypedia" id="24005">
    <property type="antibodies" value="246 antibodies from 28 providers"/>
</dbReference>
<dbReference type="DNASU" id="2528"/>
<dbReference type="Ensembl" id="ENST00000286955.5">
    <molecule id="P51993-1"/>
    <property type="protein sequence ID" value="ENSP00000286955.5"/>
    <property type="gene ID" value="ENSG00000156413.15"/>
</dbReference>
<dbReference type="Ensembl" id="ENST00000318336.10">
    <molecule id="P51993-1"/>
    <property type="protein sequence ID" value="ENSP00000313398.4"/>
    <property type="gene ID" value="ENSG00000156413.15"/>
</dbReference>
<dbReference type="Ensembl" id="ENST00000524754.1">
    <molecule id="P51993-1"/>
    <property type="protein sequence ID" value="ENSP00000431708.1"/>
    <property type="gene ID" value="ENSG00000156413.15"/>
</dbReference>
<dbReference type="Ensembl" id="ENST00000527106.5">
    <molecule id="P51993-1"/>
    <property type="protein sequence ID" value="ENSP00000432954.1"/>
    <property type="gene ID" value="ENSG00000156413.15"/>
</dbReference>
<dbReference type="Ensembl" id="ENST00000592563.1">
    <molecule id="P51993-2"/>
    <property type="protein sequence ID" value="ENSP00000466016.1"/>
    <property type="gene ID" value="ENSG00000156413.15"/>
</dbReference>
<dbReference type="GeneID" id="2528"/>
<dbReference type="KEGG" id="hsa:2528"/>
<dbReference type="MANE-Select" id="ENST00000318336.10">
    <property type="protein sequence ID" value="ENSP00000313398.4"/>
    <property type="RefSeq nucleotide sequence ID" value="NM_000150.4"/>
    <property type="RefSeq protein sequence ID" value="NP_000141.1"/>
</dbReference>
<dbReference type="UCSC" id="uc002mdf.2">
    <molecule id="P51993-1"/>
    <property type="organism name" value="human"/>
</dbReference>
<dbReference type="AGR" id="HGNC:4017"/>
<dbReference type="CTD" id="2528"/>
<dbReference type="DisGeNET" id="2528"/>
<dbReference type="GeneCards" id="FUT6"/>
<dbReference type="HGNC" id="HGNC:4017">
    <property type="gene designation" value="FUT6"/>
</dbReference>
<dbReference type="HPA" id="ENSG00000156413">
    <property type="expression patterns" value="Tissue enhanced (esophagus, kidney, salivary gland)"/>
</dbReference>
<dbReference type="MalaCards" id="FUT6"/>
<dbReference type="MIM" id="136836">
    <property type="type" value="gene"/>
</dbReference>
<dbReference type="MIM" id="613852">
    <property type="type" value="phenotype"/>
</dbReference>
<dbReference type="neXtProt" id="NX_P51993"/>
<dbReference type="OpenTargets" id="ENSG00000156413"/>
<dbReference type="PharmGKB" id="PA28433"/>
<dbReference type="VEuPathDB" id="HostDB:ENSG00000156413"/>
<dbReference type="eggNOG" id="KOG2619">
    <property type="taxonomic scope" value="Eukaryota"/>
</dbReference>
<dbReference type="GeneTree" id="ENSGT00940000163389"/>
<dbReference type="HOGENOM" id="CLU_032075_4_1_1"/>
<dbReference type="InParanoid" id="P51993"/>
<dbReference type="OMA" id="CKACRIL"/>
<dbReference type="OrthoDB" id="427096at2759"/>
<dbReference type="PAN-GO" id="P51993">
    <property type="GO annotations" value="2 GO annotations based on evolutionary models"/>
</dbReference>
<dbReference type="PhylomeDB" id="P51993"/>
<dbReference type="TreeFam" id="TF316348"/>
<dbReference type="BioCyc" id="MetaCyc:HS08124-MONOMER"/>
<dbReference type="BRENDA" id="2.4.1.152">
    <property type="organism ID" value="2681"/>
</dbReference>
<dbReference type="BRENDA" id="2.4.1.65">
    <property type="organism ID" value="2681"/>
</dbReference>
<dbReference type="PathwayCommons" id="P51993"/>
<dbReference type="Reactome" id="R-HSA-9037629">
    <property type="pathway name" value="Lewis blood group biosynthesis"/>
</dbReference>
<dbReference type="UniPathway" id="UPA00378"/>
<dbReference type="BioGRID-ORCS" id="2528">
    <property type="hits" value="22 hits in 1131 CRISPR screens"/>
</dbReference>
<dbReference type="ChiTaRS" id="FUT6">
    <property type="organism name" value="human"/>
</dbReference>
<dbReference type="GeneWiki" id="FUT6"/>
<dbReference type="GenomeRNAi" id="2528"/>
<dbReference type="Pharos" id="P51993">
    <property type="development level" value="Tchem"/>
</dbReference>
<dbReference type="PRO" id="PR:P51993"/>
<dbReference type="Proteomes" id="UP000005640">
    <property type="component" value="Chromosome 19"/>
</dbReference>
<dbReference type="RNAct" id="P51993">
    <property type="molecule type" value="protein"/>
</dbReference>
<dbReference type="Bgee" id="ENSG00000156413">
    <property type="expression patterns" value="Expressed in lower esophagus mucosa and 153 other cell types or tissues"/>
</dbReference>
<dbReference type="ExpressionAtlas" id="P51993">
    <property type="expression patterns" value="baseline and differential"/>
</dbReference>
<dbReference type="GO" id="GO:0070062">
    <property type="term" value="C:extracellular exosome"/>
    <property type="evidence" value="ECO:0007005"/>
    <property type="project" value="UniProtKB"/>
</dbReference>
<dbReference type="GO" id="GO:0005576">
    <property type="term" value="C:extracellular region"/>
    <property type="evidence" value="ECO:0000314"/>
    <property type="project" value="UniProtKB"/>
</dbReference>
<dbReference type="GO" id="GO:0005794">
    <property type="term" value="C:Golgi apparatus"/>
    <property type="evidence" value="ECO:0000314"/>
    <property type="project" value="HPA"/>
</dbReference>
<dbReference type="GO" id="GO:0032580">
    <property type="term" value="C:Golgi cisterna membrane"/>
    <property type="evidence" value="ECO:0007669"/>
    <property type="project" value="UniProtKB-SubCell"/>
</dbReference>
<dbReference type="GO" id="GO:0000139">
    <property type="term" value="C:Golgi membrane"/>
    <property type="evidence" value="ECO:0000304"/>
    <property type="project" value="Reactome"/>
</dbReference>
<dbReference type="GO" id="GO:0034709">
    <property type="term" value="C:methylosome"/>
    <property type="evidence" value="ECO:0000318"/>
    <property type="project" value="GO_Central"/>
</dbReference>
<dbReference type="GO" id="GO:0017083">
    <property type="term" value="F:4-galactosyl-N-acetylglucosaminide 3-alpha-L-fucosyltransferase activity"/>
    <property type="evidence" value="ECO:0000314"/>
    <property type="project" value="UniProtKB"/>
</dbReference>
<dbReference type="GO" id="GO:0046920">
    <property type="term" value="F:alpha-(1-&gt;3)-fucosyltransferase activity"/>
    <property type="evidence" value="ECO:0000304"/>
    <property type="project" value="UniProtKB"/>
</dbReference>
<dbReference type="GO" id="GO:0008417">
    <property type="term" value="F:fucosyltransferase activity"/>
    <property type="evidence" value="ECO:0000314"/>
    <property type="project" value="BHF-UCL"/>
</dbReference>
<dbReference type="GO" id="GO:0006672">
    <property type="term" value="P:ceramide metabolic process"/>
    <property type="evidence" value="ECO:0000314"/>
    <property type="project" value="BHF-UCL"/>
</dbReference>
<dbReference type="GO" id="GO:0006688">
    <property type="term" value="P:glycosphingolipid biosynthetic process"/>
    <property type="evidence" value="ECO:0000314"/>
    <property type="project" value="UniProtKB"/>
</dbReference>
<dbReference type="GO" id="GO:0042355">
    <property type="term" value="P:L-fucose catabolic process"/>
    <property type="evidence" value="ECO:0000303"/>
    <property type="project" value="UniProtKB"/>
</dbReference>
<dbReference type="GO" id="GO:0036071">
    <property type="term" value="P:N-glycan fucosylation"/>
    <property type="evidence" value="ECO:0000314"/>
    <property type="project" value="UniProtKB"/>
</dbReference>
<dbReference type="GO" id="GO:0009312">
    <property type="term" value="P:oligosaccharide biosynthetic process"/>
    <property type="evidence" value="ECO:0000304"/>
    <property type="project" value="Reactome"/>
</dbReference>
<dbReference type="GO" id="GO:0007309">
    <property type="term" value="P:oocyte axis specification"/>
    <property type="evidence" value="ECO:0000318"/>
    <property type="project" value="GO_Central"/>
</dbReference>
<dbReference type="GO" id="GO:0006486">
    <property type="term" value="P:protein glycosylation"/>
    <property type="evidence" value="ECO:0000304"/>
    <property type="project" value="UniProtKB"/>
</dbReference>
<dbReference type="GO" id="GO:0006487">
    <property type="term" value="P:protein N-linked glycosylation"/>
    <property type="evidence" value="ECO:0000314"/>
    <property type="project" value="UniProtKB"/>
</dbReference>
<dbReference type="GO" id="GO:0006493">
    <property type="term" value="P:protein O-linked glycosylation"/>
    <property type="evidence" value="ECO:0000314"/>
    <property type="project" value="UniProtKB"/>
</dbReference>
<dbReference type="FunFam" id="3.40.50.11660:FF:000001">
    <property type="entry name" value="alpha-(1,3)-fucosyltransferase 9"/>
    <property type="match status" value="1"/>
</dbReference>
<dbReference type="Gene3D" id="3.40.50.11660">
    <property type="entry name" value="Glycosyl transferase family 10, C-terminal domain"/>
    <property type="match status" value="1"/>
</dbReference>
<dbReference type="InterPro" id="IPR055270">
    <property type="entry name" value="Glyco_tran_10_C"/>
</dbReference>
<dbReference type="InterPro" id="IPR031481">
    <property type="entry name" value="Glyco_tran_10_N"/>
</dbReference>
<dbReference type="InterPro" id="IPR001503">
    <property type="entry name" value="Glyco_trans_10"/>
</dbReference>
<dbReference type="InterPro" id="IPR038577">
    <property type="entry name" value="GT10-like_C_sf"/>
</dbReference>
<dbReference type="PANTHER" id="PTHR11929:SF227">
    <property type="entry name" value="4-GALACTOSYL-N-ACETYLGLUCOSAMINIDE 3-ALPHA-L-FUCOSYLTRANSFERASE FUT6"/>
    <property type="match status" value="1"/>
</dbReference>
<dbReference type="PANTHER" id="PTHR11929">
    <property type="entry name" value="ALPHA- 1,3 -FUCOSYLTRANSFERASE"/>
    <property type="match status" value="1"/>
</dbReference>
<dbReference type="Pfam" id="PF17039">
    <property type="entry name" value="Glyco_tran_10_N"/>
    <property type="match status" value="1"/>
</dbReference>
<dbReference type="Pfam" id="PF00852">
    <property type="entry name" value="Glyco_transf_10"/>
    <property type="match status" value="1"/>
</dbReference>
<dbReference type="SUPFAM" id="SSF53756">
    <property type="entry name" value="UDP-Glycosyltransferase/glycogen phosphorylase"/>
    <property type="match status" value="1"/>
</dbReference>
<keyword id="KW-0025">Alternative splicing</keyword>
<keyword id="KW-0903">Direct protein sequencing</keyword>
<keyword id="KW-0325">Glycoprotein</keyword>
<keyword id="KW-0328">Glycosyltransferase</keyword>
<keyword id="KW-0333">Golgi apparatus</keyword>
<keyword id="KW-0443">Lipid metabolism</keyword>
<keyword id="KW-0472">Membrane</keyword>
<keyword id="KW-1267">Proteomics identification</keyword>
<keyword id="KW-1185">Reference proteome</keyword>
<keyword id="KW-0964">Secreted</keyword>
<keyword id="KW-0735">Signal-anchor</keyword>
<keyword id="KW-0808">Transferase</keyword>
<keyword id="KW-0812">Transmembrane</keyword>
<keyword id="KW-1133">Transmembrane helix</keyword>
<gene>
    <name evidence="19" type="primary">FUT6</name>
    <name type="synonym">FCT3A</name>
</gene>